<organism>
    <name type="scientific">Dictyostelium discoideum</name>
    <name type="common">Social amoeba</name>
    <dbReference type="NCBI Taxonomy" id="44689"/>
    <lineage>
        <taxon>Eukaryota</taxon>
        <taxon>Amoebozoa</taxon>
        <taxon>Evosea</taxon>
        <taxon>Eumycetozoa</taxon>
        <taxon>Dictyostelia</taxon>
        <taxon>Dictyosteliales</taxon>
        <taxon>Dictyosteliaceae</taxon>
        <taxon>Dictyostelium</taxon>
    </lineage>
</organism>
<gene>
    <name type="ORF">DDB_G0287837</name>
</gene>
<dbReference type="EMBL" id="AAFI02000104">
    <property type="protein sequence ID" value="EAL63565.1"/>
    <property type="molecule type" value="Genomic_DNA"/>
</dbReference>
<dbReference type="RefSeq" id="XP_637088.1">
    <property type="nucleotide sequence ID" value="XM_631996.1"/>
</dbReference>
<dbReference type="FunCoup" id="Q54JR4">
    <property type="interactions" value="646"/>
</dbReference>
<dbReference type="PaxDb" id="44689-DDB0305049"/>
<dbReference type="EnsemblProtists" id="EAL63565">
    <property type="protein sequence ID" value="EAL63565"/>
    <property type="gene ID" value="DDB_G0287837"/>
</dbReference>
<dbReference type="GeneID" id="8626343"/>
<dbReference type="KEGG" id="ddi:DDB_G0287837"/>
<dbReference type="dictyBase" id="DDB_G0287837"/>
<dbReference type="VEuPathDB" id="AmoebaDB:DDB_G0287837"/>
<dbReference type="eggNOG" id="ENOG502RIPR">
    <property type="taxonomic scope" value="Eukaryota"/>
</dbReference>
<dbReference type="HOGENOM" id="CLU_1135266_0_0_1"/>
<dbReference type="InParanoid" id="Q54JR4"/>
<dbReference type="OMA" id="NIQCKNI"/>
<dbReference type="PRO" id="PR:Q54JR4"/>
<dbReference type="Proteomes" id="UP000002195">
    <property type="component" value="Chromosome 5"/>
</dbReference>
<name>Y7668_DICDI</name>
<protein>
    <recommendedName>
        <fullName>Uncharacterized protein DDB_G0287837</fullName>
    </recommendedName>
</protein>
<accession>Q54JR4</accession>
<proteinExistence type="predicted"/>
<feature type="chain" id="PRO_0000347009" description="Uncharacterized protein DDB_G0287837">
    <location>
        <begin position="1"/>
        <end position="245"/>
    </location>
</feature>
<keyword id="KW-1185">Reference proteome</keyword>
<reference key="1">
    <citation type="journal article" date="2005" name="Nature">
        <title>The genome of the social amoeba Dictyostelium discoideum.</title>
        <authorList>
            <person name="Eichinger L."/>
            <person name="Pachebat J.A."/>
            <person name="Gloeckner G."/>
            <person name="Rajandream M.A."/>
            <person name="Sucgang R."/>
            <person name="Berriman M."/>
            <person name="Song J."/>
            <person name="Olsen R."/>
            <person name="Szafranski K."/>
            <person name="Xu Q."/>
            <person name="Tunggal B."/>
            <person name="Kummerfeld S."/>
            <person name="Madera M."/>
            <person name="Konfortov B.A."/>
            <person name="Rivero F."/>
            <person name="Bankier A.T."/>
            <person name="Lehmann R."/>
            <person name="Hamlin N."/>
            <person name="Davies R."/>
            <person name="Gaudet P."/>
            <person name="Fey P."/>
            <person name="Pilcher K."/>
            <person name="Chen G."/>
            <person name="Saunders D."/>
            <person name="Sodergren E.J."/>
            <person name="Davis P."/>
            <person name="Kerhornou A."/>
            <person name="Nie X."/>
            <person name="Hall N."/>
            <person name="Anjard C."/>
            <person name="Hemphill L."/>
            <person name="Bason N."/>
            <person name="Farbrother P."/>
            <person name="Desany B."/>
            <person name="Just E."/>
            <person name="Morio T."/>
            <person name="Rost R."/>
            <person name="Churcher C.M."/>
            <person name="Cooper J."/>
            <person name="Haydock S."/>
            <person name="van Driessche N."/>
            <person name="Cronin A."/>
            <person name="Goodhead I."/>
            <person name="Muzny D.M."/>
            <person name="Mourier T."/>
            <person name="Pain A."/>
            <person name="Lu M."/>
            <person name="Harper D."/>
            <person name="Lindsay R."/>
            <person name="Hauser H."/>
            <person name="James K.D."/>
            <person name="Quiles M."/>
            <person name="Madan Babu M."/>
            <person name="Saito T."/>
            <person name="Buchrieser C."/>
            <person name="Wardroper A."/>
            <person name="Felder M."/>
            <person name="Thangavelu M."/>
            <person name="Johnson D."/>
            <person name="Knights A."/>
            <person name="Loulseged H."/>
            <person name="Mungall K.L."/>
            <person name="Oliver K."/>
            <person name="Price C."/>
            <person name="Quail M.A."/>
            <person name="Urushihara H."/>
            <person name="Hernandez J."/>
            <person name="Rabbinowitsch E."/>
            <person name="Steffen D."/>
            <person name="Sanders M."/>
            <person name="Ma J."/>
            <person name="Kohara Y."/>
            <person name="Sharp S."/>
            <person name="Simmonds M.N."/>
            <person name="Spiegler S."/>
            <person name="Tivey A."/>
            <person name="Sugano S."/>
            <person name="White B."/>
            <person name="Walker D."/>
            <person name="Woodward J.R."/>
            <person name="Winckler T."/>
            <person name="Tanaka Y."/>
            <person name="Shaulsky G."/>
            <person name="Schleicher M."/>
            <person name="Weinstock G.M."/>
            <person name="Rosenthal A."/>
            <person name="Cox E.C."/>
            <person name="Chisholm R.L."/>
            <person name="Gibbs R.A."/>
            <person name="Loomis W.F."/>
            <person name="Platzer M."/>
            <person name="Kay R.R."/>
            <person name="Williams J.G."/>
            <person name="Dear P.H."/>
            <person name="Noegel A.A."/>
            <person name="Barrell B.G."/>
            <person name="Kuspa A."/>
        </authorList>
    </citation>
    <scope>NUCLEOTIDE SEQUENCE [LARGE SCALE GENOMIC DNA]</scope>
    <source>
        <strain>AX4</strain>
    </source>
</reference>
<sequence>MKNNTKIIETKCSMEQINVSPKYYDIISFGYFPNYFNINNSTNSIENQSNNIKEYKISILEDFQENDNQTNKLCTTITNNIKIIKKISKSKKLNSKSHIFKKRNFKSNCTSSNQNSNNVIATLILPKIDDNNNNNNNDQIENNSINCINNNNINNNINENNKFTWVYYHYDCNGKRKSIYDDNEMSELSTTPFPKNHICSKCSSSQRSVFKLNKFGKLDCSFCLNNNNNTTTTTTTTPQPNSDFN</sequence>